<protein>
    <recommendedName>
        <fullName evidence="1">Disulfide bond formation protein B</fullName>
    </recommendedName>
    <alternativeName>
        <fullName evidence="1">Disulfide oxidoreductase</fullName>
    </alternativeName>
</protein>
<sequence length="176" mass="20142">MLRFLNQCSQGRGAWLLMAFTALALELTALWFQHVMLLKPCVLCIYERCALFGVLGAALIGAIAPKTPLRYVAMVIWLYSAFRGVQLTYEHTMLQLYPSPFATCDFMVRFPEWLPLDKWVPQVFVASGDCAERQWDFLGLEMPQWLLGIFIAYLIVAVLVVISQPFKAKKRDLFGR</sequence>
<accession>Q32H31</accession>
<evidence type="ECO:0000255" key="1">
    <source>
        <dbReference type="HAMAP-Rule" id="MF_00286"/>
    </source>
</evidence>
<keyword id="KW-0997">Cell inner membrane</keyword>
<keyword id="KW-1003">Cell membrane</keyword>
<keyword id="KW-0143">Chaperone</keyword>
<keyword id="KW-1015">Disulfide bond</keyword>
<keyword id="KW-0249">Electron transport</keyword>
<keyword id="KW-0472">Membrane</keyword>
<keyword id="KW-0560">Oxidoreductase</keyword>
<keyword id="KW-0676">Redox-active center</keyword>
<keyword id="KW-1185">Reference proteome</keyword>
<keyword id="KW-0812">Transmembrane</keyword>
<keyword id="KW-1133">Transmembrane helix</keyword>
<keyword id="KW-0813">Transport</keyword>
<organism>
    <name type="scientific">Shigella dysenteriae serotype 1 (strain Sd197)</name>
    <dbReference type="NCBI Taxonomy" id="300267"/>
    <lineage>
        <taxon>Bacteria</taxon>
        <taxon>Pseudomonadati</taxon>
        <taxon>Pseudomonadota</taxon>
        <taxon>Gammaproteobacteria</taxon>
        <taxon>Enterobacterales</taxon>
        <taxon>Enterobacteriaceae</taxon>
        <taxon>Shigella</taxon>
    </lineage>
</organism>
<comment type="function">
    <text evidence="1">Required for disulfide bond formation in some periplasmic proteins. Acts by oxidizing the DsbA protein.</text>
</comment>
<comment type="subcellular location">
    <subcellularLocation>
        <location evidence="1">Cell inner membrane</location>
        <topology evidence="1">Multi-pass membrane protein</topology>
    </subcellularLocation>
</comment>
<comment type="similarity">
    <text evidence="1">Belongs to the DsbB family.</text>
</comment>
<proteinExistence type="inferred from homology"/>
<gene>
    <name evidence="1" type="primary">dsbB</name>
    <name type="ordered locus">SDY_1222</name>
</gene>
<dbReference type="EMBL" id="CP000034">
    <property type="protein sequence ID" value="ABB61374.1"/>
    <property type="molecule type" value="Genomic_DNA"/>
</dbReference>
<dbReference type="RefSeq" id="WP_000943459.1">
    <property type="nucleotide sequence ID" value="NC_007606.1"/>
</dbReference>
<dbReference type="RefSeq" id="YP_402865.1">
    <property type="nucleotide sequence ID" value="NC_007606.1"/>
</dbReference>
<dbReference type="BMRB" id="Q32H31"/>
<dbReference type="SMR" id="Q32H31"/>
<dbReference type="STRING" id="300267.SDY_1222"/>
<dbReference type="EnsemblBacteria" id="ABB61374">
    <property type="protein sequence ID" value="ABB61374"/>
    <property type="gene ID" value="SDY_1222"/>
</dbReference>
<dbReference type="GeneID" id="75203298"/>
<dbReference type="KEGG" id="sdy:SDY_1222"/>
<dbReference type="PATRIC" id="fig|300267.13.peg.1450"/>
<dbReference type="HOGENOM" id="CLU_098660_2_0_6"/>
<dbReference type="Proteomes" id="UP000002716">
    <property type="component" value="Chromosome"/>
</dbReference>
<dbReference type="GO" id="GO:0005886">
    <property type="term" value="C:plasma membrane"/>
    <property type="evidence" value="ECO:0007669"/>
    <property type="project" value="UniProtKB-SubCell"/>
</dbReference>
<dbReference type="GO" id="GO:0009055">
    <property type="term" value="F:electron transfer activity"/>
    <property type="evidence" value="ECO:0007669"/>
    <property type="project" value="UniProtKB-UniRule"/>
</dbReference>
<dbReference type="GO" id="GO:0015035">
    <property type="term" value="F:protein-disulfide reductase activity"/>
    <property type="evidence" value="ECO:0007669"/>
    <property type="project" value="UniProtKB-UniRule"/>
</dbReference>
<dbReference type="GO" id="GO:0006457">
    <property type="term" value="P:protein folding"/>
    <property type="evidence" value="ECO:0007669"/>
    <property type="project" value="InterPro"/>
</dbReference>
<dbReference type="FunFam" id="1.20.1550.10:FF:000001">
    <property type="entry name" value="Disulfide bond formation protein B"/>
    <property type="match status" value="1"/>
</dbReference>
<dbReference type="Gene3D" id="1.20.1550.10">
    <property type="entry name" value="DsbB-like"/>
    <property type="match status" value="1"/>
</dbReference>
<dbReference type="HAMAP" id="MF_00286">
    <property type="entry name" value="DsbB"/>
    <property type="match status" value="1"/>
</dbReference>
<dbReference type="InterPro" id="IPR003752">
    <property type="entry name" value="DiS_bond_form_DsbB/BdbC"/>
</dbReference>
<dbReference type="InterPro" id="IPR022920">
    <property type="entry name" value="Disulphide_bond_form_DsbB"/>
</dbReference>
<dbReference type="InterPro" id="IPR050183">
    <property type="entry name" value="DsbB"/>
</dbReference>
<dbReference type="InterPro" id="IPR023380">
    <property type="entry name" value="DsbB-like_sf"/>
</dbReference>
<dbReference type="NCBIfam" id="NF002485">
    <property type="entry name" value="PRK01749.1"/>
    <property type="match status" value="1"/>
</dbReference>
<dbReference type="PANTHER" id="PTHR36570">
    <property type="entry name" value="DISULFIDE BOND FORMATION PROTEIN B"/>
    <property type="match status" value="1"/>
</dbReference>
<dbReference type="PANTHER" id="PTHR36570:SF2">
    <property type="entry name" value="DISULFIDE BOND FORMATION PROTEIN B"/>
    <property type="match status" value="1"/>
</dbReference>
<dbReference type="Pfam" id="PF02600">
    <property type="entry name" value="DsbB"/>
    <property type="match status" value="1"/>
</dbReference>
<dbReference type="SUPFAM" id="SSF158442">
    <property type="entry name" value="DsbB-like"/>
    <property type="match status" value="1"/>
</dbReference>
<name>DSBB_SHIDS</name>
<feature type="chain" id="PRO_0000298415" description="Disulfide bond formation protein B">
    <location>
        <begin position="1"/>
        <end position="176"/>
    </location>
</feature>
<feature type="topological domain" description="Cytoplasmic" evidence="1">
    <location>
        <begin position="1"/>
        <end position="14"/>
    </location>
</feature>
<feature type="transmembrane region" description="Helical" evidence="1">
    <location>
        <begin position="15"/>
        <end position="31"/>
    </location>
</feature>
<feature type="topological domain" description="Periplasmic" evidence="1">
    <location>
        <begin position="32"/>
        <end position="49"/>
    </location>
</feature>
<feature type="transmembrane region" description="Helical" evidence="1">
    <location>
        <begin position="50"/>
        <end position="65"/>
    </location>
</feature>
<feature type="topological domain" description="Cytoplasmic" evidence="1">
    <location>
        <begin position="66"/>
        <end position="71"/>
    </location>
</feature>
<feature type="transmembrane region" description="Helical" evidence="1">
    <location>
        <begin position="72"/>
        <end position="89"/>
    </location>
</feature>
<feature type="topological domain" description="Periplasmic" evidence="1">
    <location>
        <begin position="90"/>
        <end position="144"/>
    </location>
</feature>
<feature type="transmembrane region" description="Helical" evidence="1">
    <location>
        <begin position="145"/>
        <end position="163"/>
    </location>
</feature>
<feature type="topological domain" description="Cytoplasmic" evidence="1">
    <location>
        <begin position="164"/>
        <end position="176"/>
    </location>
</feature>
<feature type="disulfide bond" description="Redox-active" evidence="1">
    <location>
        <begin position="41"/>
        <end position="44"/>
    </location>
</feature>
<feature type="disulfide bond" description="Redox-active" evidence="1">
    <location>
        <begin position="104"/>
        <end position="130"/>
    </location>
</feature>
<reference key="1">
    <citation type="journal article" date="2005" name="Nucleic Acids Res.">
        <title>Genome dynamics and diversity of Shigella species, the etiologic agents of bacillary dysentery.</title>
        <authorList>
            <person name="Yang F."/>
            <person name="Yang J."/>
            <person name="Zhang X."/>
            <person name="Chen L."/>
            <person name="Jiang Y."/>
            <person name="Yan Y."/>
            <person name="Tang X."/>
            <person name="Wang J."/>
            <person name="Xiong Z."/>
            <person name="Dong J."/>
            <person name="Xue Y."/>
            <person name="Zhu Y."/>
            <person name="Xu X."/>
            <person name="Sun L."/>
            <person name="Chen S."/>
            <person name="Nie H."/>
            <person name="Peng J."/>
            <person name="Xu J."/>
            <person name="Wang Y."/>
            <person name="Yuan Z."/>
            <person name="Wen Y."/>
            <person name="Yao Z."/>
            <person name="Shen Y."/>
            <person name="Qiang B."/>
            <person name="Hou Y."/>
            <person name="Yu J."/>
            <person name="Jin Q."/>
        </authorList>
    </citation>
    <scope>NUCLEOTIDE SEQUENCE [LARGE SCALE GENOMIC DNA]</scope>
    <source>
        <strain>Sd197</strain>
    </source>
</reference>